<sequence>MSDSLVVCDVDPELKETLRKFRFRKETNNAAIIMKVDKDRQMVVLEDEFQNVSPEELKLELPERQPRFVVYSYKYVHDDGRVSYPLCFIFSSPVGCKPEQQMMYAGSKNRLVQIAELTKVFEIRTTDDLNETWLKEKLAFFR</sequence>
<protein>
    <recommendedName>
        <fullName>Glia maturation factor gamma</fullName>
        <shortName>GMF-gamma</shortName>
    </recommendedName>
</protein>
<organism>
    <name type="scientific">Rattus norvegicus</name>
    <name type="common">Rat</name>
    <dbReference type="NCBI Taxonomy" id="10116"/>
    <lineage>
        <taxon>Eukaryota</taxon>
        <taxon>Metazoa</taxon>
        <taxon>Chordata</taxon>
        <taxon>Craniata</taxon>
        <taxon>Vertebrata</taxon>
        <taxon>Euteleostomi</taxon>
        <taxon>Mammalia</taxon>
        <taxon>Eutheria</taxon>
        <taxon>Euarchontoglires</taxon>
        <taxon>Glires</taxon>
        <taxon>Rodentia</taxon>
        <taxon>Myomorpha</taxon>
        <taxon>Muroidea</taxon>
        <taxon>Muridae</taxon>
        <taxon>Murinae</taxon>
        <taxon>Rattus</taxon>
    </lineage>
</organism>
<keyword id="KW-0007">Acetylation</keyword>
<keyword id="KW-0339">Growth factor</keyword>
<keyword id="KW-1185">Reference proteome</keyword>
<reference key="1">
    <citation type="journal article" date="2000" name="J. Biochem.">
        <title>Cloning of a rat glia maturation factor-gamma (rGMFG) cDNA and expression of its mRNA and protein in rat organs.</title>
        <authorList>
            <person name="Tsuiki H."/>
            <person name="Asai K."/>
            <person name="Yamamoto M."/>
            <person name="Fujita K."/>
            <person name="Inoue Y."/>
            <person name="Kawai Y."/>
            <person name="Tada T."/>
            <person name="Moriyama A."/>
            <person name="Wada Y."/>
            <person name="Kato T."/>
        </authorList>
    </citation>
    <scope>NUCLEOTIDE SEQUENCE [MRNA]</scope>
    <source>
        <strain>Sprague-Dawley</strain>
        <tissue>Pulmonary artery</tissue>
    </source>
</reference>
<accession>Q80T18</accession>
<dbReference type="EMBL" id="AB007364">
    <property type="protein sequence ID" value="BAC76430.1"/>
    <property type="molecule type" value="mRNA"/>
</dbReference>
<dbReference type="RefSeq" id="NP_851605.1">
    <property type="nucleotide sequence ID" value="NM_181091.2"/>
</dbReference>
<dbReference type="SMR" id="Q80T18"/>
<dbReference type="FunCoup" id="Q80T18">
    <property type="interactions" value="165"/>
</dbReference>
<dbReference type="STRING" id="10116.ENSRNOP00000026891"/>
<dbReference type="iPTMnet" id="Q80T18"/>
<dbReference type="PhosphoSitePlus" id="Q80T18"/>
<dbReference type="PaxDb" id="10116-ENSRNOP00000026891"/>
<dbReference type="GeneID" id="113940"/>
<dbReference type="KEGG" id="rno:113940"/>
<dbReference type="AGR" id="RGD:620506"/>
<dbReference type="CTD" id="9535"/>
<dbReference type="RGD" id="620506">
    <property type="gene designation" value="Gmfg"/>
</dbReference>
<dbReference type="eggNOG" id="KOG1736">
    <property type="taxonomic scope" value="Eukaryota"/>
</dbReference>
<dbReference type="InParanoid" id="Q80T18"/>
<dbReference type="PhylomeDB" id="Q80T18"/>
<dbReference type="Reactome" id="R-RNO-6798695">
    <property type="pathway name" value="Neutrophil degranulation"/>
</dbReference>
<dbReference type="PRO" id="PR:Q80T18"/>
<dbReference type="Proteomes" id="UP000002494">
    <property type="component" value="Unplaced"/>
</dbReference>
<dbReference type="GO" id="GO:0030864">
    <property type="term" value="C:cortical actin cytoskeleton"/>
    <property type="evidence" value="ECO:0000318"/>
    <property type="project" value="GO_Central"/>
</dbReference>
<dbReference type="GO" id="GO:0003779">
    <property type="term" value="F:actin binding"/>
    <property type="evidence" value="ECO:0007669"/>
    <property type="project" value="InterPro"/>
</dbReference>
<dbReference type="GO" id="GO:0071933">
    <property type="term" value="F:Arp2/3 complex binding"/>
    <property type="evidence" value="ECO:0000318"/>
    <property type="project" value="GO_Central"/>
</dbReference>
<dbReference type="GO" id="GO:0008083">
    <property type="term" value="F:growth factor activity"/>
    <property type="evidence" value="ECO:0007669"/>
    <property type="project" value="UniProtKB-KW"/>
</dbReference>
<dbReference type="GO" id="GO:0019207">
    <property type="term" value="F:kinase regulator activity"/>
    <property type="evidence" value="ECO:0000303"/>
    <property type="project" value="RGD"/>
</dbReference>
<dbReference type="GO" id="GO:0071846">
    <property type="term" value="P:actin filament debranching"/>
    <property type="evidence" value="ECO:0000266"/>
    <property type="project" value="RGD"/>
</dbReference>
<dbReference type="GO" id="GO:0034316">
    <property type="term" value="P:negative regulation of Arp2/3 complex-mediated actin nucleation"/>
    <property type="evidence" value="ECO:0000266"/>
    <property type="project" value="RGD"/>
</dbReference>
<dbReference type="CDD" id="cd11283">
    <property type="entry name" value="ADF_GMF-beta_like"/>
    <property type="match status" value="1"/>
</dbReference>
<dbReference type="FunFam" id="3.40.20.10:FF:000024">
    <property type="entry name" value="Glia maturation factor"/>
    <property type="match status" value="1"/>
</dbReference>
<dbReference type="Gene3D" id="3.40.20.10">
    <property type="entry name" value="Severin"/>
    <property type="match status" value="1"/>
</dbReference>
<dbReference type="InterPro" id="IPR002108">
    <property type="entry name" value="ADF-H"/>
</dbReference>
<dbReference type="InterPro" id="IPR029006">
    <property type="entry name" value="ADF-H/Gelsolin-like_dom_sf"/>
</dbReference>
<dbReference type="InterPro" id="IPR011171">
    <property type="entry name" value="GMF"/>
</dbReference>
<dbReference type="PANTHER" id="PTHR11249:SF4">
    <property type="entry name" value="GLIA MATURATION FACTOR GAMMA"/>
    <property type="match status" value="1"/>
</dbReference>
<dbReference type="PANTHER" id="PTHR11249">
    <property type="entry name" value="GLIAL FACTOR NATURATION FACTOR"/>
    <property type="match status" value="1"/>
</dbReference>
<dbReference type="Pfam" id="PF00241">
    <property type="entry name" value="Cofilin_ADF"/>
    <property type="match status" value="1"/>
</dbReference>
<dbReference type="PIRSF" id="PIRSF001788">
    <property type="entry name" value="GMF-beta"/>
    <property type="match status" value="1"/>
</dbReference>
<dbReference type="SMART" id="SM00102">
    <property type="entry name" value="ADF"/>
    <property type="match status" value="1"/>
</dbReference>
<dbReference type="SUPFAM" id="SSF55753">
    <property type="entry name" value="Actin depolymerizing proteins"/>
    <property type="match status" value="1"/>
</dbReference>
<dbReference type="PROSITE" id="PS51263">
    <property type="entry name" value="ADF_H"/>
    <property type="match status" value="1"/>
</dbReference>
<name>GMFG_RAT</name>
<evidence type="ECO:0000250" key="1">
    <source>
        <dbReference type="UniProtKB" id="O60234"/>
    </source>
</evidence>
<evidence type="ECO:0000255" key="2">
    <source>
        <dbReference type="PROSITE-ProRule" id="PRU00599"/>
    </source>
</evidence>
<evidence type="ECO:0000305" key="3"/>
<gene>
    <name type="primary">Gmfg</name>
</gene>
<comment type="tissue specificity">
    <text>Expressed in rat thymus, testis, and spleen. Is present predominantly in proliferative and differentiative organs.</text>
</comment>
<comment type="similarity">
    <text evidence="3">Belongs to the actin-binding proteins ADF family. GMF subfamily.</text>
</comment>
<feature type="initiator methionine" description="Removed" evidence="1">
    <location>
        <position position="1"/>
    </location>
</feature>
<feature type="chain" id="PRO_0000214949" description="Glia maturation factor gamma">
    <location>
        <begin position="2"/>
        <end position="142"/>
    </location>
</feature>
<feature type="domain" description="ADF-H" evidence="2">
    <location>
        <begin position="4"/>
        <end position="139"/>
    </location>
</feature>
<feature type="modified residue" description="N-acetylserine" evidence="1">
    <location>
        <position position="2"/>
    </location>
</feature>
<proteinExistence type="evidence at transcript level"/>